<proteinExistence type="inferred from homology"/>
<keyword id="KW-0028">Amino-acid biosynthesis</keyword>
<keyword id="KW-0055">Arginine biosynthesis</keyword>
<keyword id="KW-0963">Cytoplasm</keyword>
<keyword id="KW-0808">Transferase</keyword>
<dbReference type="EC" id="2.1.3.3" evidence="2"/>
<dbReference type="EMBL" id="CP000702">
    <property type="protein sequence ID" value="ABQ47651.1"/>
    <property type="molecule type" value="Genomic_DNA"/>
</dbReference>
<dbReference type="RefSeq" id="WP_011944060.1">
    <property type="nucleotide sequence ID" value="NC_009486.1"/>
</dbReference>
<dbReference type="SMR" id="A5IN78"/>
<dbReference type="STRING" id="390874.Tpet_1646"/>
<dbReference type="KEGG" id="tpt:Tpet_1646"/>
<dbReference type="eggNOG" id="COG0078">
    <property type="taxonomic scope" value="Bacteria"/>
</dbReference>
<dbReference type="HOGENOM" id="CLU_043846_3_2_0"/>
<dbReference type="UniPathway" id="UPA00068">
    <property type="reaction ID" value="UER00112"/>
</dbReference>
<dbReference type="Proteomes" id="UP000006558">
    <property type="component" value="Chromosome"/>
</dbReference>
<dbReference type="GO" id="GO:0005737">
    <property type="term" value="C:cytoplasm"/>
    <property type="evidence" value="ECO:0007669"/>
    <property type="project" value="UniProtKB-SubCell"/>
</dbReference>
<dbReference type="GO" id="GO:0016597">
    <property type="term" value="F:amino acid binding"/>
    <property type="evidence" value="ECO:0007669"/>
    <property type="project" value="InterPro"/>
</dbReference>
<dbReference type="GO" id="GO:0004585">
    <property type="term" value="F:ornithine carbamoyltransferase activity"/>
    <property type="evidence" value="ECO:0007669"/>
    <property type="project" value="UniProtKB-UniRule"/>
</dbReference>
<dbReference type="GO" id="GO:0042450">
    <property type="term" value="P:arginine biosynthetic process via ornithine"/>
    <property type="evidence" value="ECO:0007669"/>
    <property type="project" value="TreeGrafter"/>
</dbReference>
<dbReference type="GO" id="GO:0019240">
    <property type="term" value="P:citrulline biosynthetic process"/>
    <property type="evidence" value="ECO:0007669"/>
    <property type="project" value="TreeGrafter"/>
</dbReference>
<dbReference type="GO" id="GO:0006526">
    <property type="term" value="P:L-arginine biosynthetic process"/>
    <property type="evidence" value="ECO:0007669"/>
    <property type="project" value="UniProtKB-UniRule"/>
</dbReference>
<dbReference type="FunFam" id="3.40.50.1370:FF:000008">
    <property type="entry name" value="Ornithine carbamoyltransferase"/>
    <property type="match status" value="1"/>
</dbReference>
<dbReference type="Gene3D" id="3.40.50.1370">
    <property type="entry name" value="Aspartate/ornithine carbamoyltransferase"/>
    <property type="match status" value="2"/>
</dbReference>
<dbReference type="HAMAP" id="MF_01109">
    <property type="entry name" value="OTCase"/>
    <property type="match status" value="1"/>
</dbReference>
<dbReference type="InterPro" id="IPR006132">
    <property type="entry name" value="Asp/Orn_carbamoyltranf_P-bd"/>
</dbReference>
<dbReference type="InterPro" id="IPR006130">
    <property type="entry name" value="Asp/Orn_carbamoylTrfase"/>
</dbReference>
<dbReference type="InterPro" id="IPR036901">
    <property type="entry name" value="Asp/Orn_carbamoylTrfase_sf"/>
</dbReference>
<dbReference type="InterPro" id="IPR006131">
    <property type="entry name" value="Asp_carbamoyltransf_Asp/Orn-bd"/>
</dbReference>
<dbReference type="InterPro" id="IPR002292">
    <property type="entry name" value="Orn/put_carbamltrans"/>
</dbReference>
<dbReference type="InterPro" id="IPR024904">
    <property type="entry name" value="OTCase_ArgI"/>
</dbReference>
<dbReference type="NCBIfam" id="TIGR00658">
    <property type="entry name" value="orni_carb_tr"/>
    <property type="match status" value="1"/>
</dbReference>
<dbReference type="NCBIfam" id="NF001986">
    <property type="entry name" value="PRK00779.1"/>
    <property type="match status" value="1"/>
</dbReference>
<dbReference type="PANTHER" id="PTHR45753:SF2">
    <property type="entry name" value="ORNITHINE CARBAMOYLTRANSFERASE"/>
    <property type="match status" value="1"/>
</dbReference>
<dbReference type="PANTHER" id="PTHR45753">
    <property type="entry name" value="ORNITHINE CARBAMOYLTRANSFERASE, MITOCHONDRIAL"/>
    <property type="match status" value="1"/>
</dbReference>
<dbReference type="Pfam" id="PF00185">
    <property type="entry name" value="OTCace"/>
    <property type="match status" value="1"/>
</dbReference>
<dbReference type="Pfam" id="PF02729">
    <property type="entry name" value="OTCace_N"/>
    <property type="match status" value="1"/>
</dbReference>
<dbReference type="PRINTS" id="PR00100">
    <property type="entry name" value="AOTCASE"/>
</dbReference>
<dbReference type="PRINTS" id="PR00102">
    <property type="entry name" value="OTCASE"/>
</dbReference>
<dbReference type="SUPFAM" id="SSF53671">
    <property type="entry name" value="Aspartate/ornithine carbamoyltransferase"/>
    <property type="match status" value="1"/>
</dbReference>
<dbReference type="PROSITE" id="PS00097">
    <property type="entry name" value="CARBAMOYLTRANSFERASE"/>
    <property type="match status" value="1"/>
</dbReference>
<accession>A5IN78</accession>
<feature type="chain" id="PRO_1000084866" description="Ornithine carbamoyltransferase">
    <location>
        <begin position="1"/>
        <end position="313"/>
    </location>
</feature>
<feature type="binding site" evidence="2">
    <location>
        <begin position="57"/>
        <end position="60"/>
    </location>
    <ligand>
        <name>carbamoyl phosphate</name>
        <dbReference type="ChEBI" id="CHEBI:58228"/>
    </ligand>
</feature>
<feature type="binding site" evidence="2">
    <location>
        <position position="108"/>
    </location>
    <ligand>
        <name>carbamoyl phosphate</name>
        <dbReference type="ChEBI" id="CHEBI:58228"/>
    </ligand>
</feature>
<feature type="binding site" evidence="2">
    <location>
        <begin position="135"/>
        <end position="138"/>
    </location>
    <ligand>
        <name>carbamoyl phosphate</name>
        <dbReference type="ChEBI" id="CHEBI:58228"/>
    </ligand>
</feature>
<feature type="binding site" evidence="2">
    <location>
        <position position="167"/>
    </location>
    <ligand>
        <name>L-ornithine</name>
        <dbReference type="ChEBI" id="CHEBI:46911"/>
    </ligand>
</feature>
<feature type="binding site" evidence="2">
    <location>
        <position position="231"/>
    </location>
    <ligand>
        <name>L-ornithine</name>
        <dbReference type="ChEBI" id="CHEBI:46911"/>
    </ligand>
</feature>
<feature type="binding site" evidence="2">
    <location>
        <begin position="235"/>
        <end position="236"/>
    </location>
    <ligand>
        <name>L-ornithine</name>
        <dbReference type="ChEBI" id="CHEBI:46911"/>
    </ligand>
</feature>
<feature type="binding site" evidence="2">
    <location>
        <begin position="272"/>
        <end position="273"/>
    </location>
    <ligand>
        <name>carbamoyl phosphate</name>
        <dbReference type="ChEBI" id="CHEBI:58228"/>
    </ligand>
</feature>
<feature type="binding site" evidence="2">
    <location>
        <position position="300"/>
    </location>
    <ligand>
        <name>carbamoyl phosphate</name>
        <dbReference type="ChEBI" id="CHEBI:58228"/>
    </ligand>
</feature>
<protein>
    <recommendedName>
        <fullName evidence="2">Ornithine carbamoyltransferase</fullName>
        <shortName evidence="2">OTCase</shortName>
        <ecNumber evidence="2">2.1.3.3</ecNumber>
    </recommendedName>
</protein>
<sequence length="313" mass="35379">MSVNMKGRSLLTLLDFSSEEIRYLLDISKQVKMESRSRLRTERFKGMTLAMIFEKRSTRTRLAFETAFAEEGGHAIFLSPNDIHLGTKESLEDTARVLGRMVDAIMFRGYKQETVEKLAEYSGVPVYNGLTDDFHPTQALADLMTIEENFGRLKGVKVVFMGDTRNNVATSLMIACAKMGMNFVACGPEELKPRPDIFERCQEIARETSASVSFTSNLEEALAGADVVYTDVWASMGEEDKEKERISLLKPYQVNKRVMEMTGKPETIFMHCLPAVKGQEVTYEVIEGKQSRVWDEAENRKHTIKAVMIATLL</sequence>
<gene>
    <name evidence="2" type="primary">argF</name>
    <name type="ordered locus">Tpet_1646</name>
</gene>
<name>OTC_THEP1</name>
<reference key="1">
    <citation type="submission" date="2007-05" db="EMBL/GenBank/DDBJ databases">
        <title>Complete sequence of Thermotoga petrophila RKU-1.</title>
        <authorList>
            <consortium name="US DOE Joint Genome Institute"/>
            <person name="Copeland A."/>
            <person name="Lucas S."/>
            <person name="Lapidus A."/>
            <person name="Barry K."/>
            <person name="Glavina del Rio T."/>
            <person name="Dalin E."/>
            <person name="Tice H."/>
            <person name="Pitluck S."/>
            <person name="Sims D."/>
            <person name="Brettin T."/>
            <person name="Bruce D."/>
            <person name="Detter J.C."/>
            <person name="Han C."/>
            <person name="Tapia R."/>
            <person name="Schmutz J."/>
            <person name="Larimer F."/>
            <person name="Land M."/>
            <person name="Hauser L."/>
            <person name="Kyrpides N."/>
            <person name="Mikhailova N."/>
            <person name="Nelson K."/>
            <person name="Gogarten J.P."/>
            <person name="Noll K."/>
            <person name="Richardson P."/>
        </authorList>
    </citation>
    <scope>NUCLEOTIDE SEQUENCE [LARGE SCALE GENOMIC DNA]</scope>
    <source>
        <strain>ATCC BAA-488 / DSM 13995 / JCM 10881 / RKU-1</strain>
    </source>
</reference>
<organism>
    <name type="scientific">Thermotoga petrophila (strain ATCC BAA-488 / DSM 13995 / JCM 10881 / RKU-1)</name>
    <dbReference type="NCBI Taxonomy" id="390874"/>
    <lineage>
        <taxon>Bacteria</taxon>
        <taxon>Thermotogati</taxon>
        <taxon>Thermotogota</taxon>
        <taxon>Thermotogae</taxon>
        <taxon>Thermotogales</taxon>
        <taxon>Thermotogaceae</taxon>
        <taxon>Thermotoga</taxon>
    </lineage>
</organism>
<comment type="function">
    <text evidence="1">Reversibly catalyzes the transfer of the carbamoyl group from carbamoyl phosphate (CP) to the N(epsilon) atom of ornithine (ORN) to produce L-citrulline.</text>
</comment>
<comment type="catalytic activity">
    <reaction evidence="2">
        <text>carbamoyl phosphate + L-ornithine = L-citrulline + phosphate + H(+)</text>
        <dbReference type="Rhea" id="RHEA:19513"/>
        <dbReference type="ChEBI" id="CHEBI:15378"/>
        <dbReference type="ChEBI" id="CHEBI:43474"/>
        <dbReference type="ChEBI" id="CHEBI:46911"/>
        <dbReference type="ChEBI" id="CHEBI:57743"/>
        <dbReference type="ChEBI" id="CHEBI:58228"/>
        <dbReference type="EC" id="2.1.3.3"/>
    </reaction>
</comment>
<comment type="pathway">
    <text evidence="2">Amino-acid biosynthesis; L-arginine biosynthesis; L-arginine from L-ornithine and carbamoyl phosphate: step 1/3.</text>
</comment>
<comment type="subcellular location">
    <subcellularLocation>
        <location evidence="2">Cytoplasm</location>
    </subcellularLocation>
</comment>
<comment type="similarity">
    <text evidence="2">Belongs to the aspartate/ornithine carbamoyltransferase superfamily. OTCase family.</text>
</comment>
<evidence type="ECO:0000250" key="1"/>
<evidence type="ECO:0000255" key="2">
    <source>
        <dbReference type="HAMAP-Rule" id="MF_01109"/>
    </source>
</evidence>